<comment type="function">
    <text evidence="1">Together with its co-chaperonin GroES, plays an essential role in assisting protein folding. The GroEL-GroES system forms a nano-cage that allows encapsulation of the non-native substrate proteins and provides a physical environment optimized to promote and accelerate protein folding.</text>
</comment>
<comment type="catalytic activity">
    <reaction evidence="1">
        <text>ATP + H2O + a folded polypeptide = ADP + phosphate + an unfolded polypeptide.</text>
        <dbReference type="EC" id="5.6.1.7"/>
    </reaction>
</comment>
<comment type="subunit">
    <text evidence="1">Forms a cylinder of 14 subunits composed of two heptameric rings stacked back-to-back. Interacts with the co-chaperonin GroES.</text>
</comment>
<comment type="subcellular location">
    <subcellularLocation>
        <location evidence="1">Cytoplasm</location>
    </subcellularLocation>
</comment>
<comment type="similarity">
    <text evidence="1">Belongs to the chaperonin (HSP60) family.</text>
</comment>
<gene>
    <name evidence="1" type="primary">groEL</name>
    <name evidence="1" type="synonym">groL</name>
    <name type="ordered locus">Ent638_0330</name>
</gene>
<accession>A4W5N8</accession>
<feature type="chain" id="PRO_1000061256" description="Chaperonin GroEL">
    <location>
        <begin position="1"/>
        <end position="547"/>
    </location>
</feature>
<feature type="binding site" evidence="1">
    <location>
        <begin position="30"/>
        <end position="33"/>
    </location>
    <ligand>
        <name>ATP</name>
        <dbReference type="ChEBI" id="CHEBI:30616"/>
    </ligand>
</feature>
<feature type="binding site" evidence="1">
    <location>
        <position position="51"/>
    </location>
    <ligand>
        <name>ATP</name>
        <dbReference type="ChEBI" id="CHEBI:30616"/>
    </ligand>
</feature>
<feature type="binding site" evidence="1">
    <location>
        <begin position="87"/>
        <end position="91"/>
    </location>
    <ligand>
        <name>ATP</name>
        <dbReference type="ChEBI" id="CHEBI:30616"/>
    </ligand>
</feature>
<feature type="binding site" evidence="1">
    <location>
        <position position="415"/>
    </location>
    <ligand>
        <name>ATP</name>
        <dbReference type="ChEBI" id="CHEBI:30616"/>
    </ligand>
</feature>
<feature type="binding site" evidence="1">
    <location>
        <begin position="479"/>
        <end position="481"/>
    </location>
    <ligand>
        <name>ATP</name>
        <dbReference type="ChEBI" id="CHEBI:30616"/>
    </ligand>
</feature>
<feature type="binding site" evidence="1">
    <location>
        <position position="495"/>
    </location>
    <ligand>
        <name>ATP</name>
        <dbReference type="ChEBI" id="CHEBI:30616"/>
    </ligand>
</feature>
<reference key="1">
    <citation type="journal article" date="2010" name="PLoS Genet.">
        <title>Genome sequence of the plant growth promoting endophytic bacterium Enterobacter sp. 638.</title>
        <authorList>
            <person name="Taghavi S."/>
            <person name="van der Lelie D."/>
            <person name="Hoffman A."/>
            <person name="Zhang Y.B."/>
            <person name="Walla M.D."/>
            <person name="Vangronsveld J."/>
            <person name="Newman L."/>
            <person name="Monchy S."/>
        </authorList>
    </citation>
    <scope>NUCLEOTIDE SEQUENCE [LARGE SCALE GENOMIC DNA]</scope>
    <source>
        <strain>638</strain>
    </source>
</reference>
<evidence type="ECO:0000255" key="1">
    <source>
        <dbReference type="HAMAP-Rule" id="MF_00600"/>
    </source>
</evidence>
<dbReference type="EC" id="5.6.1.7" evidence="1"/>
<dbReference type="EMBL" id="CP000653">
    <property type="protein sequence ID" value="ABP59018.1"/>
    <property type="molecule type" value="Genomic_DNA"/>
</dbReference>
<dbReference type="RefSeq" id="WP_011915591.1">
    <property type="nucleotide sequence ID" value="NC_009436.1"/>
</dbReference>
<dbReference type="SMR" id="A4W5N8"/>
<dbReference type="STRING" id="399742.Ent638_0330"/>
<dbReference type="KEGG" id="ent:Ent638_0330"/>
<dbReference type="eggNOG" id="COG0459">
    <property type="taxonomic scope" value="Bacteria"/>
</dbReference>
<dbReference type="HOGENOM" id="CLU_016503_3_0_6"/>
<dbReference type="OrthoDB" id="9766614at2"/>
<dbReference type="Proteomes" id="UP000000230">
    <property type="component" value="Chromosome"/>
</dbReference>
<dbReference type="GO" id="GO:0005737">
    <property type="term" value="C:cytoplasm"/>
    <property type="evidence" value="ECO:0007669"/>
    <property type="project" value="UniProtKB-SubCell"/>
</dbReference>
<dbReference type="GO" id="GO:0005524">
    <property type="term" value="F:ATP binding"/>
    <property type="evidence" value="ECO:0007669"/>
    <property type="project" value="UniProtKB-UniRule"/>
</dbReference>
<dbReference type="GO" id="GO:0140662">
    <property type="term" value="F:ATP-dependent protein folding chaperone"/>
    <property type="evidence" value="ECO:0007669"/>
    <property type="project" value="InterPro"/>
</dbReference>
<dbReference type="GO" id="GO:0016853">
    <property type="term" value="F:isomerase activity"/>
    <property type="evidence" value="ECO:0007669"/>
    <property type="project" value="UniProtKB-KW"/>
</dbReference>
<dbReference type="GO" id="GO:0051082">
    <property type="term" value="F:unfolded protein binding"/>
    <property type="evidence" value="ECO:0007669"/>
    <property type="project" value="UniProtKB-UniRule"/>
</dbReference>
<dbReference type="GO" id="GO:0042026">
    <property type="term" value="P:protein refolding"/>
    <property type="evidence" value="ECO:0007669"/>
    <property type="project" value="UniProtKB-UniRule"/>
</dbReference>
<dbReference type="CDD" id="cd03344">
    <property type="entry name" value="GroEL"/>
    <property type="match status" value="1"/>
</dbReference>
<dbReference type="FunFam" id="1.10.560.10:FF:000001">
    <property type="entry name" value="60 kDa chaperonin"/>
    <property type="match status" value="1"/>
</dbReference>
<dbReference type="FunFam" id="3.50.7.10:FF:000001">
    <property type="entry name" value="60 kDa chaperonin"/>
    <property type="match status" value="1"/>
</dbReference>
<dbReference type="Gene3D" id="3.50.7.10">
    <property type="entry name" value="GroEL"/>
    <property type="match status" value="1"/>
</dbReference>
<dbReference type="Gene3D" id="1.10.560.10">
    <property type="entry name" value="GroEL-like equatorial domain"/>
    <property type="match status" value="1"/>
</dbReference>
<dbReference type="Gene3D" id="3.30.260.10">
    <property type="entry name" value="TCP-1-like chaperonin intermediate domain"/>
    <property type="match status" value="1"/>
</dbReference>
<dbReference type="HAMAP" id="MF_00600">
    <property type="entry name" value="CH60"/>
    <property type="match status" value="1"/>
</dbReference>
<dbReference type="InterPro" id="IPR018370">
    <property type="entry name" value="Chaperonin_Cpn60_CS"/>
</dbReference>
<dbReference type="InterPro" id="IPR001844">
    <property type="entry name" value="Cpn60/GroEL"/>
</dbReference>
<dbReference type="InterPro" id="IPR002423">
    <property type="entry name" value="Cpn60/GroEL/TCP-1"/>
</dbReference>
<dbReference type="InterPro" id="IPR027409">
    <property type="entry name" value="GroEL-like_apical_dom_sf"/>
</dbReference>
<dbReference type="InterPro" id="IPR027413">
    <property type="entry name" value="GROEL-like_equatorial_sf"/>
</dbReference>
<dbReference type="InterPro" id="IPR027410">
    <property type="entry name" value="TCP-1-like_intermed_sf"/>
</dbReference>
<dbReference type="NCBIfam" id="TIGR02348">
    <property type="entry name" value="GroEL"/>
    <property type="match status" value="1"/>
</dbReference>
<dbReference type="NCBIfam" id="NF000592">
    <property type="entry name" value="PRK00013.1"/>
    <property type="match status" value="1"/>
</dbReference>
<dbReference type="NCBIfam" id="NF009487">
    <property type="entry name" value="PRK12849.1"/>
    <property type="match status" value="1"/>
</dbReference>
<dbReference type="NCBIfam" id="NF009488">
    <property type="entry name" value="PRK12850.1"/>
    <property type="match status" value="1"/>
</dbReference>
<dbReference type="NCBIfam" id="NF009489">
    <property type="entry name" value="PRK12851.1"/>
    <property type="match status" value="1"/>
</dbReference>
<dbReference type="PANTHER" id="PTHR45633">
    <property type="entry name" value="60 KDA HEAT SHOCK PROTEIN, MITOCHONDRIAL"/>
    <property type="match status" value="1"/>
</dbReference>
<dbReference type="Pfam" id="PF00118">
    <property type="entry name" value="Cpn60_TCP1"/>
    <property type="match status" value="1"/>
</dbReference>
<dbReference type="PRINTS" id="PR00298">
    <property type="entry name" value="CHAPERONIN60"/>
</dbReference>
<dbReference type="SUPFAM" id="SSF52029">
    <property type="entry name" value="GroEL apical domain-like"/>
    <property type="match status" value="1"/>
</dbReference>
<dbReference type="SUPFAM" id="SSF48592">
    <property type="entry name" value="GroEL equatorial domain-like"/>
    <property type="match status" value="1"/>
</dbReference>
<dbReference type="SUPFAM" id="SSF54849">
    <property type="entry name" value="GroEL-intermediate domain like"/>
    <property type="match status" value="1"/>
</dbReference>
<dbReference type="PROSITE" id="PS00296">
    <property type="entry name" value="CHAPERONINS_CPN60"/>
    <property type="match status" value="1"/>
</dbReference>
<keyword id="KW-0067">ATP-binding</keyword>
<keyword id="KW-0143">Chaperone</keyword>
<keyword id="KW-0963">Cytoplasm</keyword>
<keyword id="KW-0413">Isomerase</keyword>
<keyword id="KW-0547">Nucleotide-binding</keyword>
<sequence length="547" mass="57274">MAAKDVKFGNDARVKMLRGVNVLADAVKVTLGPKGRNVVLDKSFGAPAITKDGVSVAREIELEDKFENMGAQMVKEVASKANDAAGDGTTTATVLAQAIITEGLKAVAAGMNPMDLKRGIDKAVIAAVEELKTLSVPCSDSKAIAQVGTISANSDETVGKLIAEAMDKVGKEGVITVEDGTGLEDELDVVEGMQFDRGYLSPYFINKPETGAVELESPFILLADKKISNIREMLPVLEAVAKAGKPLLIIAEDVEGEALATLVVNTMRGIVKVAAVKAPGFGDRRKAMLQDIATLTGGTVISEEIGMELEKATLEDMGQAKRVIINKDTTTIIDGVGEEAAIQGRVGQIRKQIEEATSDYDREKLQERVAKLAGGVAVIKVGAATEVEMKEKKARVDDALHATRAAVEEGVVAGGGVALIRVASKLSELRGQNEDQNVGIKVALRAMEAPLRQIVLNCGEEPSVVANTVKAGDGNYGYNAATEEYGNMIDMGILDPTKVTRSALQYAASVAGLMITTECMITDVPKGDGPDLGAGGMGGMGGMGGMM</sequence>
<protein>
    <recommendedName>
        <fullName evidence="1">Chaperonin GroEL</fullName>
        <ecNumber evidence="1">5.6.1.7</ecNumber>
    </recommendedName>
    <alternativeName>
        <fullName evidence="1">60 kDa chaperonin</fullName>
    </alternativeName>
    <alternativeName>
        <fullName evidence="1">Chaperonin-60</fullName>
        <shortName evidence="1">Cpn60</shortName>
    </alternativeName>
</protein>
<organism>
    <name type="scientific">Enterobacter sp. (strain 638)</name>
    <dbReference type="NCBI Taxonomy" id="399742"/>
    <lineage>
        <taxon>Bacteria</taxon>
        <taxon>Pseudomonadati</taxon>
        <taxon>Pseudomonadota</taxon>
        <taxon>Gammaproteobacteria</taxon>
        <taxon>Enterobacterales</taxon>
        <taxon>Enterobacteriaceae</taxon>
        <taxon>Enterobacter</taxon>
    </lineage>
</organism>
<name>CH60_ENT38</name>
<proteinExistence type="inferred from homology"/>